<reference key="1">
    <citation type="journal article" date="2009" name="Toxicon">
        <title>Cloning of serine protease cDNAs from Crotalus durissus terrificus venom gland and expression of a functional Gyroxin homologue in COS-7 cells.</title>
        <authorList>
            <person name="Yonamine C.M."/>
            <person name="Prieto-da-Silva A.R."/>
            <person name="Magalhaes G.S."/>
            <person name="Radis-Baptista G."/>
            <person name="Morganti L."/>
            <person name="Ambiel F.C."/>
            <person name="Chura-Chambi R.M."/>
            <person name="Yamane T."/>
            <person name="Camillo M.A."/>
        </authorList>
    </citation>
    <scope>NUCLEOTIDE SEQUENCE [MRNA]</scope>
    <source>
        <tissue>Venom gland</tissue>
    </source>
</reference>
<reference key="2">
    <citation type="journal article" date="2001" name="Toxicon">
        <title>Gyroxin fails to modify in vitro release of labelled dopamine and acetylcholine from rat and mouse striatal tissue.</title>
        <authorList>
            <person name="Camillo M.A."/>
            <person name="Arruda Paes P.C."/>
            <person name="Troncone L.R."/>
            <person name="Rogero J.R."/>
        </authorList>
    </citation>
    <scope>FUNCTION</scope>
</reference>
<reference key="3">
    <citation type="journal article" date="2011" name="Toxicon">
        <title>Gyroxin increases blood-brain barrier permeability to Evans blue dye in mice.</title>
        <authorList>
            <person name="Alves da Silva J.A."/>
            <person name="Oliveira K.C."/>
            <person name="Camillo M.A."/>
        </authorList>
    </citation>
    <scope>FUNCTION</scope>
</reference>
<accession>B0FXM3</accession>
<proteinExistence type="evidence at transcript level"/>
<name>VSP17_CRODU</name>
<evidence type="ECO:0000250" key="1"/>
<evidence type="ECO:0000255" key="2"/>
<evidence type="ECO:0000255" key="3">
    <source>
        <dbReference type="PROSITE-ProRule" id="PRU00274"/>
    </source>
</evidence>
<evidence type="ECO:0000269" key="4">
    <source>
    </source>
</evidence>
<evidence type="ECO:0000269" key="5">
    <source>
    </source>
</evidence>
<evidence type="ECO:0000305" key="6"/>
<evidence type="ECO:0000305" key="7">
    <source>
    </source>
</evidence>
<feature type="signal peptide" evidence="2">
    <location>
        <begin position="1"/>
        <end position="18"/>
    </location>
</feature>
<feature type="propeptide" id="PRO_5000301408" evidence="1">
    <location>
        <begin position="19"/>
        <end position="259"/>
    </location>
</feature>
<feature type="chain" id="PRO_5000301409" description="Thrombin-like enzyme gyroxin B1.7">
    <location>
        <begin position="25"/>
        <end position="259"/>
    </location>
</feature>
<feature type="domain" description="Peptidase S1" evidence="3">
    <location>
        <begin position="25"/>
        <end position="250"/>
    </location>
</feature>
<feature type="active site" description="Charge relay system" evidence="1">
    <location>
        <position position="64"/>
    </location>
</feature>
<feature type="active site" description="Charge relay system" evidence="1">
    <location>
        <position position="109"/>
    </location>
</feature>
<feature type="active site" description="Charge relay system" evidence="1">
    <location>
        <position position="205"/>
    </location>
</feature>
<feature type="glycosylation site" description="N-linked (GlcNAc...) asparagine" evidence="2">
    <location>
        <position position="102"/>
    </location>
</feature>
<feature type="disulfide bond" evidence="3">
    <location>
        <begin position="31"/>
        <end position="162"/>
    </location>
</feature>
<feature type="disulfide bond" evidence="3">
    <location>
        <begin position="49"/>
        <end position="65"/>
    </location>
</feature>
<feature type="disulfide bond" evidence="3">
    <location>
        <begin position="141"/>
        <end position="211"/>
    </location>
</feature>
<feature type="disulfide bond" evidence="3">
    <location>
        <begin position="173"/>
        <end position="190"/>
    </location>
</feature>
<feature type="disulfide bond" evidence="3">
    <location>
        <begin position="201"/>
        <end position="226"/>
    </location>
</feature>
<comment type="function">
    <text evidence="1 4 5">Thrombin-like snake venom serine protease. Displays a specificity similar to trypsin. Releases only fibrinopeptide A in the conversion of fibrinogen to fibrin. Shows coagulant, esterase and amidase activities (By similarity). Reversibly increases the permeability of the blood brain barrier (BBB) in mice. Induces the barrel rotation syndrome in mice, which is manifested by gyroxin-like, rapid rolling motions. This syndrome may be due to its effect on BBB permeability, and certainly also to other actions affecting endogenous substrates present in the endothelium, nervous tissues or blood.</text>
</comment>
<comment type="subunit">
    <text evidence="1">Monomer.</text>
</comment>
<comment type="subcellular location">
    <subcellularLocation>
        <location>Secreted</location>
    </subcellularLocation>
</comment>
<comment type="tissue specificity">
    <text>Expressed by the venom gland.</text>
</comment>
<comment type="miscellaneous">
    <text evidence="7">Negative results: does not have phospholipase activity, does not aggregate platelet, and does not affect the release of the neurotransmitters dopamine and acetylcholine in the nervous system.</text>
</comment>
<comment type="similarity">
    <text evidence="3">Belongs to the peptidase S1 family. Snake venom subfamily.</text>
</comment>
<comment type="caution">
    <text evidence="6">Information taken from PubMed:20637222 and PubMed:11137545 are not linked to a specific sequence. Hence, it is not sure whether the function corresponds to this protein or to a paralog.</text>
</comment>
<sequence length="259" mass="28184">MVLIRVLANLLILQLSYAQKSSELVIGGDECNINEHRLLAIVYTNSSQCAGTLINQEWVLTAAHCDGENMDIYLGVHNESVQYDDEEGRVAAEKFFCLSSRNYTKWDKDIMLIRLNIPVRNSTHIAPLSLPSSPPSVGSVCRVMGWGTITSPNETYPDVPHCANINLFDYEVCLAAYPEFGLPATSRTLCAGIQQGGKDTCGSDSGGSLICNGQFQGIVSWGDNPCAQPHKPALYTKVLDDTEWIQSIIAGNTAVTCPP</sequence>
<protein>
    <recommendedName>
        <fullName>Thrombin-like enzyme gyroxin B1.7</fullName>
        <shortName>SVTLE gyroxin B1.7</shortName>
        <ecNumber>3.4.21.-</ecNumber>
    </recommendedName>
    <alternativeName>
        <fullName>Fibrinogen-clotting enzyme</fullName>
    </alternativeName>
    <alternativeName>
        <fullName>Snake venom serine protease</fullName>
        <shortName>SVSP</shortName>
    </alternativeName>
</protein>
<organism>
    <name type="scientific">Crotalus durissus terrificus</name>
    <name type="common">South American rattlesnake</name>
    <dbReference type="NCBI Taxonomy" id="8732"/>
    <lineage>
        <taxon>Eukaryota</taxon>
        <taxon>Metazoa</taxon>
        <taxon>Chordata</taxon>
        <taxon>Craniata</taxon>
        <taxon>Vertebrata</taxon>
        <taxon>Euteleostomi</taxon>
        <taxon>Lepidosauria</taxon>
        <taxon>Squamata</taxon>
        <taxon>Bifurcata</taxon>
        <taxon>Unidentata</taxon>
        <taxon>Episquamata</taxon>
        <taxon>Toxicofera</taxon>
        <taxon>Serpentes</taxon>
        <taxon>Colubroidea</taxon>
        <taxon>Viperidae</taxon>
        <taxon>Crotalinae</taxon>
        <taxon>Crotalus</taxon>
    </lineage>
</organism>
<dbReference type="EC" id="3.4.21.-"/>
<dbReference type="EMBL" id="EU360954">
    <property type="protein sequence ID" value="ABY65931.1"/>
    <property type="molecule type" value="mRNA"/>
</dbReference>
<dbReference type="SMR" id="B0FXM3"/>
<dbReference type="MEROPS" id="S01.497"/>
<dbReference type="GO" id="GO:0005576">
    <property type="term" value="C:extracellular region"/>
    <property type="evidence" value="ECO:0007669"/>
    <property type="project" value="UniProtKB-SubCell"/>
</dbReference>
<dbReference type="GO" id="GO:0030141">
    <property type="term" value="C:secretory granule"/>
    <property type="evidence" value="ECO:0007669"/>
    <property type="project" value="TreeGrafter"/>
</dbReference>
<dbReference type="GO" id="GO:0004252">
    <property type="term" value="F:serine-type endopeptidase activity"/>
    <property type="evidence" value="ECO:0007669"/>
    <property type="project" value="InterPro"/>
</dbReference>
<dbReference type="GO" id="GO:0090729">
    <property type="term" value="F:toxin activity"/>
    <property type="evidence" value="ECO:0007669"/>
    <property type="project" value="UniProtKB-KW"/>
</dbReference>
<dbReference type="GO" id="GO:0006508">
    <property type="term" value="P:proteolysis"/>
    <property type="evidence" value="ECO:0007669"/>
    <property type="project" value="UniProtKB-KW"/>
</dbReference>
<dbReference type="CDD" id="cd00190">
    <property type="entry name" value="Tryp_SPc"/>
    <property type="match status" value="1"/>
</dbReference>
<dbReference type="FunFam" id="2.40.10.10:FF:000158">
    <property type="entry name" value="Thrombin-like enzyme saxthrombin"/>
    <property type="match status" value="1"/>
</dbReference>
<dbReference type="Gene3D" id="2.40.10.10">
    <property type="entry name" value="Trypsin-like serine proteases"/>
    <property type="match status" value="2"/>
</dbReference>
<dbReference type="InterPro" id="IPR009003">
    <property type="entry name" value="Peptidase_S1_PA"/>
</dbReference>
<dbReference type="InterPro" id="IPR043504">
    <property type="entry name" value="Peptidase_S1_PA_chymotrypsin"/>
</dbReference>
<dbReference type="InterPro" id="IPR001314">
    <property type="entry name" value="Peptidase_S1A"/>
</dbReference>
<dbReference type="InterPro" id="IPR001254">
    <property type="entry name" value="Trypsin_dom"/>
</dbReference>
<dbReference type="InterPro" id="IPR018114">
    <property type="entry name" value="TRYPSIN_HIS"/>
</dbReference>
<dbReference type="PANTHER" id="PTHR24271:SF47">
    <property type="entry name" value="KALLIKREIN-1"/>
    <property type="match status" value="1"/>
</dbReference>
<dbReference type="PANTHER" id="PTHR24271">
    <property type="entry name" value="KALLIKREIN-RELATED"/>
    <property type="match status" value="1"/>
</dbReference>
<dbReference type="Pfam" id="PF00089">
    <property type="entry name" value="Trypsin"/>
    <property type="match status" value="1"/>
</dbReference>
<dbReference type="PRINTS" id="PR00722">
    <property type="entry name" value="CHYMOTRYPSIN"/>
</dbReference>
<dbReference type="SMART" id="SM00020">
    <property type="entry name" value="Tryp_SPc"/>
    <property type="match status" value="1"/>
</dbReference>
<dbReference type="SUPFAM" id="SSF50494">
    <property type="entry name" value="Trypsin-like serine proteases"/>
    <property type="match status" value="1"/>
</dbReference>
<dbReference type="PROSITE" id="PS50240">
    <property type="entry name" value="TRYPSIN_DOM"/>
    <property type="match status" value="1"/>
</dbReference>
<dbReference type="PROSITE" id="PS00134">
    <property type="entry name" value="TRYPSIN_HIS"/>
    <property type="match status" value="1"/>
</dbReference>
<keyword id="KW-1204">Blood coagulation cascade activating toxin</keyword>
<keyword id="KW-1015">Disulfide bond</keyword>
<keyword id="KW-0325">Glycoprotein</keyword>
<keyword id="KW-1199">Hemostasis impairing toxin</keyword>
<keyword id="KW-0378">Hydrolase</keyword>
<keyword id="KW-0645">Protease</keyword>
<keyword id="KW-0964">Secreted</keyword>
<keyword id="KW-0720">Serine protease</keyword>
<keyword id="KW-0732">Signal</keyword>
<keyword id="KW-0800">Toxin</keyword>